<reference key="1">
    <citation type="journal article" date="2011" name="Genome Biol.">
        <title>Comparative and functional genomics provide insights into the pathogenicity of dermatophytic fungi.</title>
        <authorList>
            <person name="Burmester A."/>
            <person name="Shelest E."/>
            <person name="Gloeckner G."/>
            <person name="Heddergott C."/>
            <person name="Schindler S."/>
            <person name="Staib P."/>
            <person name="Heidel A."/>
            <person name="Felder M."/>
            <person name="Petzold A."/>
            <person name="Szafranski K."/>
            <person name="Feuermann M."/>
            <person name="Pedruzzi I."/>
            <person name="Priebe S."/>
            <person name="Groth M."/>
            <person name="Winkler R."/>
            <person name="Li W."/>
            <person name="Kniemeyer O."/>
            <person name="Schroeckh V."/>
            <person name="Hertweck C."/>
            <person name="Hube B."/>
            <person name="White T.C."/>
            <person name="Platzer M."/>
            <person name="Guthke R."/>
            <person name="Heitman J."/>
            <person name="Woestemeyer J."/>
            <person name="Zipfel P.F."/>
            <person name="Monod M."/>
            <person name="Brakhage A.A."/>
        </authorList>
    </citation>
    <scope>NUCLEOTIDE SEQUENCE [LARGE SCALE GENOMIC DNA]</scope>
    <source>
        <strain>ATCC MYA-4681 / CBS 112371</strain>
    </source>
</reference>
<reference key="2">
    <citation type="journal article" date="2011" name="Proteomics">
        <title>Identification of novel secreted proteases during extracellular proteolysis by dermatophytes at acidic pH.</title>
        <authorList>
            <person name="Sriranganadane D."/>
            <person name="Waridel P."/>
            <person name="Salamin K."/>
            <person name="Feuermann M."/>
            <person name="Mignon B."/>
            <person name="Staib P."/>
            <person name="Neuhaus J.M."/>
            <person name="Quadroni M."/>
            <person name="Monod M."/>
        </authorList>
    </citation>
    <scope>IDENTIFICATION BY MASS SPECTROMETRY</scope>
    <scope>SUBCELLULAR LOCATION</scope>
</reference>
<feature type="signal peptide" evidence="2">
    <location>
        <begin position="1"/>
        <end position="25"/>
    </location>
</feature>
<feature type="chain" id="PRO_5003053881" description="Glutathione hydrolase heavy chain" evidence="1">
    <location>
        <begin position="26"/>
        <end position="394"/>
    </location>
</feature>
<feature type="chain" id="PRO_0000435284" description="Glutathione hydrolase light chain" evidence="1">
    <location>
        <begin position="395"/>
        <end position="584"/>
    </location>
</feature>
<feature type="active site" description="Nucleophile" evidence="1">
    <location>
        <position position="395"/>
    </location>
</feature>
<feature type="binding site" evidence="1">
    <location>
        <position position="120"/>
    </location>
    <ligand>
        <name>L-glutamate</name>
        <dbReference type="ChEBI" id="CHEBI:29985"/>
    </ligand>
</feature>
<feature type="binding site" evidence="1">
    <location>
        <position position="413"/>
    </location>
    <ligand>
        <name>L-glutamate</name>
        <dbReference type="ChEBI" id="CHEBI:29985"/>
    </ligand>
</feature>
<feature type="binding site" evidence="1">
    <location>
        <position position="434"/>
    </location>
    <ligand>
        <name>L-glutamate</name>
        <dbReference type="ChEBI" id="CHEBI:29985"/>
    </ligand>
</feature>
<feature type="binding site" evidence="1">
    <location>
        <begin position="465"/>
        <end position="466"/>
    </location>
    <ligand>
        <name>L-glutamate</name>
        <dbReference type="ChEBI" id="CHEBI:29985"/>
    </ligand>
</feature>
<feature type="glycosylation site" description="N-linked (GlcNAc...) asparagine" evidence="3">
    <location>
        <position position="111"/>
    </location>
</feature>
<feature type="glycosylation site" description="N-linked (GlcNAc...) asparagine" evidence="3">
    <location>
        <position position="135"/>
    </location>
</feature>
<feature type="glycosylation site" description="N-linked (GlcNAc...) asparagine" evidence="3">
    <location>
        <position position="262"/>
    </location>
</feature>
<feature type="glycosylation site" description="N-linked (GlcNAc...) asparagine" evidence="3">
    <location>
        <position position="272"/>
    </location>
</feature>
<feature type="glycosylation site" description="N-linked (GlcNAc...) asparagine" evidence="3">
    <location>
        <position position="350"/>
    </location>
</feature>
<feature type="glycosylation site" description="N-linked (GlcNAc...) asparagine" evidence="3">
    <location>
        <position position="370"/>
    </location>
</feature>
<feature type="glycosylation site" description="N-linked (GlcNAc...) asparagine" evidence="3">
    <location>
        <position position="547"/>
    </location>
</feature>
<accession>D4B387</accession>
<keyword id="KW-0012">Acyltransferase</keyword>
<keyword id="KW-0317">Glutathione biosynthesis</keyword>
<keyword id="KW-0325">Glycoprotein</keyword>
<keyword id="KW-0378">Hydrolase</keyword>
<keyword id="KW-0645">Protease</keyword>
<keyword id="KW-1185">Reference proteome</keyword>
<keyword id="KW-0964">Secreted</keyword>
<keyword id="KW-0732">Signal</keyword>
<keyword id="KW-0808">Transferase</keyword>
<comment type="function">
    <text evidence="1">Cleaves the gamma-glutamyl bond of extracellular glutathione (gamma-Glu-Cys-Gly), glutathione conjugates, and other gamma-glutamyl compounds. The metabolism of glutathione releases free glutamate and the dipeptide cysteinyl-glycine, which is hydrolyzed to cysteine and glycine by dipeptidases. In the presence of high concentrations of dipeptides and some amino acids, can also catalyze a transpeptidation reaction, transferring the gamma-glutamyl moiety to an acceptor amino acid to form a new gamma-glutamyl compound. Initiates extracellular glutathione (GSH) breakdown, provides cells with a local cysteine supply and contributes to maintain intracellular GSH level. It is part of the cell antioxidant defense mechanism.</text>
</comment>
<comment type="catalytic activity">
    <reaction evidence="1">
        <text>an N-terminal (5-L-glutamyl)-[peptide] + an alpha-amino acid = 5-L-glutamyl amino acid + an N-terminal L-alpha-aminoacyl-[peptide]</text>
        <dbReference type="Rhea" id="RHEA:23904"/>
        <dbReference type="Rhea" id="RHEA-COMP:9780"/>
        <dbReference type="Rhea" id="RHEA-COMP:9795"/>
        <dbReference type="ChEBI" id="CHEBI:77644"/>
        <dbReference type="ChEBI" id="CHEBI:78597"/>
        <dbReference type="ChEBI" id="CHEBI:78599"/>
        <dbReference type="ChEBI" id="CHEBI:78608"/>
        <dbReference type="EC" id="2.3.2.2"/>
    </reaction>
</comment>
<comment type="catalytic activity">
    <reaction evidence="1">
        <text>glutathione + H2O = L-cysteinylglycine + L-glutamate</text>
        <dbReference type="Rhea" id="RHEA:28807"/>
        <dbReference type="ChEBI" id="CHEBI:15377"/>
        <dbReference type="ChEBI" id="CHEBI:29985"/>
        <dbReference type="ChEBI" id="CHEBI:57925"/>
        <dbReference type="ChEBI" id="CHEBI:61694"/>
        <dbReference type="EC" id="3.4.19.13"/>
    </reaction>
</comment>
<comment type="catalytic activity">
    <reaction evidence="1">
        <text>an S-substituted glutathione + H2O = an S-substituted L-cysteinylglycine + L-glutamate</text>
        <dbReference type="Rhea" id="RHEA:59468"/>
        <dbReference type="ChEBI" id="CHEBI:15377"/>
        <dbReference type="ChEBI" id="CHEBI:29985"/>
        <dbReference type="ChEBI" id="CHEBI:90779"/>
        <dbReference type="ChEBI" id="CHEBI:143103"/>
        <dbReference type="EC" id="3.4.19.13"/>
    </reaction>
</comment>
<comment type="catalytic activity">
    <reaction evidence="1">
        <text>leukotriene C4 + H2O = leukotriene D4 + L-glutamate</text>
        <dbReference type="Rhea" id="RHEA:31563"/>
        <dbReference type="ChEBI" id="CHEBI:15377"/>
        <dbReference type="ChEBI" id="CHEBI:29985"/>
        <dbReference type="ChEBI" id="CHEBI:57973"/>
        <dbReference type="ChEBI" id="CHEBI:63166"/>
        <dbReference type="EC" id="3.4.19.14"/>
    </reaction>
</comment>
<comment type="pathway">
    <text evidence="1">Sulfur metabolism; glutathione metabolism.</text>
</comment>
<comment type="subunit">
    <text evidence="1">Heterodimer composed of the light and heavy chains. The active site is located in the light chain.</text>
</comment>
<comment type="subcellular location">
    <subcellularLocation>
        <location evidence="4">Secreted</location>
    </subcellularLocation>
</comment>
<comment type="PTM">
    <text evidence="1">Cleaved by autocatalysis into a large and a small subunit and the autocatalytic cleavage is essential to the functional activation of the enzyme.</text>
</comment>
<comment type="similarity">
    <text evidence="5">Belongs to the gamma-glutamyltransferase family.</text>
</comment>
<protein>
    <recommendedName>
        <fullName evidence="1">Glutathione hydrolase proenzyme</fullName>
        <ecNumber evidence="1">3.4.19.13</ecNumber>
    </recommendedName>
    <alternativeName>
        <fullName evidence="5">Gamma-glutamyltransferase ARB_02921</fullName>
        <ecNumber evidence="1">2.3.2.2</ecNumber>
    </alternativeName>
    <alternativeName>
        <fullName evidence="1">Gamma-glutamyltranspeptidase</fullName>
        <shortName evidence="1">Gamma-GT</shortName>
    </alternativeName>
    <alternativeName>
        <fullName evidence="1">Leukotriene-C4 hydrolase</fullName>
        <ecNumber evidence="1">3.4.19.14</ecNumber>
    </alternativeName>
    <component>
        <recommendedName>
            <fullName evidence="1">Glutathione hydrolase heavy chain</fullName>
        </recommendedName>
    </component>
    <component>
        <recommendedName>
            <fullName evidence="1">Glutathione hydrolase light chain</fullName>
        </recommendedName>
    </component>
</protein>
<dbReference type="EC" id="3.4.19.13" evidence="1"/>
<dbReference type="EC" id="2.3.2.2" evidence="1"/>
<dbReference type="EC" id="3.4.19.14" evidence="1"/>
<dbReference type="EMBL" id="ABSU01000032">
    <property type="protein sequence ID" value="EFE30242.1"/>
    <property type="molecule type" value="Genomic_DNA"/>
</dbReference>
<dbReference type="RefSeq" id="XP_003010882.1">
    <property type="nucleotide sequence ID" value="XM_003010836.1"/>
</dbReference>
<dbReference type="SMR" id="D4B387"/>
<dbReference type="STRING" id="663331.D4B387"/>
<dbReference type="MEROPS" id="T03.011"/>
<dbReference type="GeneID" id="9524997"/>
<dbReference type="KEGG" id="abe:ARB_02921"/>
<dbReference type="eggNOG" id="KOG2410">
    <property type="taxonomic scope" value="Eukaryota"/>
</dbReference>
<dbReference type="HOGENOM" id="CLU_014813_4_0_1"/>
<dbReference type="OMA" id="GFMLVHL"/>
<dbReference type="UniPathway" id="UPA00204"/>
<dbReference type="Proteomes" id="UP000008866">
    <property type="component" value="Unassembled WGS sequence"/>
</dbReference>
<dbReference type="GO" id="GO:0005576">
    <property type="term" value="C:extracellular region"/>
    <property type="evidence" value="ECO:0007669"/>
    <property type="project" value="UniProtKB-SubCell"/>
</dbReference>
<dbReference type="GO" id="GO:0005886">
    <property type="term" value="C:plasma membrane"/>
    <property type="evidence" value="ECO:0007669"/>
    <property type="project" value="TreeGrafter"/>
</dbReference>
<dbReference type="GO" id="GO:0036374">
    <property type="term" value="F:glutathione hydrolase activity"/>
    <property type="evidence" value="ECO:0007669"/>
    <property type="project" value="UniProtKB-EC"/>
</dbReference>
<dbReference type="GO" id="GO:0103068">
    <property type="term" value="F:leukotriene C4 gamma-glutamyl transferase activity"/>
    <property type="evidence" value="ECO:0007669"/>
    <property type="project" value="UniProtKB-EC"/>
</dbReference>
<dbReference type="GO" id="GO:0002951">
    <property type="term" value="F:leukotriene-C(4) hydrolase"/>
    <property type="evidence" value="ECO:0007669"/>
    <property type="project" value="UniProtKB-EC"/>
</dbReference>
<dbReference type="GO" id="GO:0006750">
    <property type="term" value="P:glutathione biosynthetic process"/>
    <property type="evidence" value="ECO:0007669"/>
    <property type="project" value="UniProtKB-KW"/>
</dbReference>
<dbReference type="GO" id="GO:0006751">
    <property type="term" value="P:glutathione catabolic process"/>
    <property type="evidence" value="ECO:0007669"/>
    <property type="project" value="InterPro"/>
</dbReference>
<dbReference type="GO" id="GO:0006508">
    <property type="term" value="P:proteolysis"/>
    <property type="evidence" value="ECO:0007669"/>
    <property type="project" value="UniProtKB-KW"/>
</dbReference>
<dbReference type="FunFam" id="1.10.246.130:FF:000001">
    <property type="entry name" value="Gamma-glutamyltransferase 5 isoform 1"/>
    <property type="match status" value="1"/>
</dbReference>
<dbReference type="FunFam" id="3.60.20.40:FF:000008">
    <property type="entry name" value="Gamma-glutamyltranspeptidase (Eurofung)"/>
    <property type="match status" value="1"/>
</dbReference>
<dbReference type="Gene3D" id="1.10.246.130">
    <property type="match status" value="1"/>
</dbReference>
<dbReference type="Gene3D" id="3.60.20.40">
    <property type="match status" value="1"/>
</dbReference>
<dbReference type="InterPro" id="IPR043138">
    <property type="entry name" value="GGT_lsub_C"/>
</dbReference>
<dbReference type="InterPro" id="IPR000101">
    <property type="entry name" value="GGT_peptidase"/>
</dbReference>
<dbReference type="InterPro" id="IPR043137">
    <property type="entry name" value="GGT_ssub"/>
</dbReference>
<dbReference type="InterPro" id="IPR029055">
    <property type="entry name" value="Ntn_hydrolases_N"/>
</dbReference>
<dbReference type="NCBIfam" id="TIGR00066">
    <property type="entry name" value="g_glut_trans"/>
    <property type="match status" value="1"/>
</dbReference>
<dbReference type="PANTHER" id="PTHR11686">
    <property type="entry name" value="GAMMA GLUTAMYL TRANSPEPTIDASE"/>
    <property type="match status" value="1"/>
</dbReference>
<dbReference type="PANTHER" id="PTHR11686:SF62">
    <property type="entry name" value="GLUTATHIONE HYDROLASE"/>
    <property type="match status" value="1"/>
</dbReference>
<dbReference type="Pfam" id="PF01019">
    <property type="entry name" value="G_glu_transpept"/>
    <property type="match status" value="1"/>
</dbReference>
<dbReference type="PRINTS" id="PR01210">
    <property type="entry name" value="GGTRANSPTASE"/>
</dbReference>
<dbReference type="SUPFAM" id="SSF56235">
    <property type="entry name" value="N-terminal nucleophile aminohydrolases (Ntn hydrolases)"/>
    <property type="match status" value="1"/>
</dbReference>
<sequence length="584" mass="63768">MAPAAMNLLCTVLYLLSSFAQVSDAAPWLFSRSIPASYHDGRLGAVASENSMCSEYGADMLKIGGNAADAVCIYRLSLFFAFLPYPALQEDRAMYHSGIGGGGFMLIRAPNGTYEFIDFRETAPAAAFQDMFKNNTSGSTSGGLASGVPGEVRGLEYLHKNYGKLPWKTVMEPAIRTARDGFRVTEDLSRIMLHSTKNGNFLAENAAWALDFAPQGTLLKVGDIITRRRYGDTLDKIAKYGADAFYTGPMAQAMVNALRAANGTMTLEDLKNYTVVSRPTAQIEYRGMTVTSTTAPSSGVVLLSILKLLNGYKNFFRMDPGPLSTHRMDEAIRFGYGQRTELGDPLFFSNLTDYQKKMISDEAANKNRMNISDEYTQDIAVYDPKGLESLNTPGTSHISTADRSGMAVSLTTTINLYFGSRVIVPETGIIMNNEMDDFSVPGRSNSFGYKPSPSNFIRPGKRPLSSICPTIITRPDGSLYFVSGAAGGSQIITGTLQSVINVMDRKMNVRQALKAPRLHDQLVPNVALMEDEFDKKTVDFMISRKHNVTREKSGSTVESIMRLKNGVFEASGEPRLANSGGVVV</sequence>
<proteinExistence type="evidence at protein level"/>
<organism>
    <name type="scientific">Arthroderma benhamiae (strain ATCC MYA-4681 / CBS 112371)</name>
    <name type="common">Trichophyton mentagrophytes</name>
    <dbReference type="NCBI Taxonomy" id="663331"/>
    <lineage>
        <taxon>Eukaryota</taxon>
        <taxon>Fungi</taxon>
        <taxon>Dikarya</taxon>
        <taxon>Ascomycota</taxon>
        <taxon>Pezizomycotina</taxon>
        <taxon>Eurotiomycetes</taxon>
        <taxon>Eurotiomycetidae</taxon>
        <taxon>Onygenales</taxon>
        <taxon>Arthrodermataceae</taxon>
        <taxon>Trichophyton</taxon>
    </lineage>
</organism>
<evidence type="ECO:0000250" key="1">
    <source>
        <dbReference type="UniProtKB" id="P19440"/>
    </source>
</evidence>
<evidence type="ECO:0000255" key="2"/>
<evidence type="ECO:0000255" key="3">
    <source>
        <dbReference type="PROSITE-ProRule" id="PRU00498"/>
    </source>
</evidence>
<evidence type="ECO:0000269" key="4">
    <source>
    </source>
</evidence>
<evidence type="ECO:0000305" key="5"/>
<name>GGT1_ARTBC</name>
<gene>
    <name type="ORF">ARB_02921</name>
</gene>